<reference key="1">
    <citation type="journal article" date="2005" name="Science">
        <title>The transcriptional landscape of the mammalian genome.</title>
        <authorList>
            <person name="Carninci P."/>
            <person name="Kasukawa T."/>
            <person name="Katayama S."/>
            <person name="Gough J."/>
            <person name="Frith M.C."/>
            <person name="Maeda N."/>
            <person name="Oyama R."/>
            <person name="Ravasi T."/>
            <person name="Lenhard B."/>
            <person name="Wells C."/>
            <person name="Kodzius R."/>
            <person name="Shimokawa K."/>
            <person name="Bajic V.B."/>
            <person name="Brenner S.E."/>
            <person name="Batalov S."/>
            <person name="Forrest A.R."/>
            <person name="Zavolan M."/>
            <person name="Davis M.J."/>
            <person name="Wilming L.G."/>
            <person name="Aidinis V."/>
            <person name="Allen J.E."/>
            <person name="Ambesi-Impiombato A."/>
            <person name="Apweiler R."/>
            <person name="Aturaliya R.N."/>
            <person name="Bailey T.L."/>
            <person name="Bansal M."/>
            <person name="Baxter L."/>
            <person name="Beisel K.W."/>
            <person name="Bersano T."/>
            <person name="Bono H."/>
            <person name="Chalk A.M."/>
            <person name="Chiu K.P."/>
            <person name="Choudhary V."/>
            <person name="Christoffels A."/>
            <person name="Clutterbuck D.R."/>
            <person name="Crowe M.L."/>
            <person name="Dalla E."/>
            <person name="Dalrymple B.P."/>
            <person name="de Bono B."/>
            <person name="Della Gatta G."/>
            <person name="di Bernardo D."/>
            <person name="Down T."/>
            <person name="Engstrom P."/>
            <person name="Fagiolini M."/>
            <person name="Faulkner G."/>
            <person name="Fletcher C.F."/>
            <person name="Fukushima T."/>
            <person name="Furuno M."/>
            <person name="Futaki S."/>
            <person name="Gariboldi M."/>
            <person name="Georgii-Hemming P."/>
            <person name="Gingeras T.R."/>
            <person name="Gojobori T."/>
            <person name="Green R.E."/>
            <person name="Gustincich S."/>
            <person name="Harbers M."/>
            <person name="Hayashi Y."/>
            <person name="Hensch T.K."/>
            <person name="Hirokawa N."/>
            <person name="Hill D."/>
            <person name="Huminiecki L."/>
            <person name="Iacono M."/>
            <person name="Ikeo K."/>
            <person name="Iwama A."/>
            <person name="Ishikawa T."/>
            <person name="Jakt M."/>
            <person name="Kanapin A."/>
            <person name="Katoh M."/>
            <person name="Kawasawa Y."/>
            <person name="Kelso J."/>
            <person name="Kitamura H."/>
            <person name="Kitano H."/>
            <person name="Kollias G."/>
            <person name="Krishnan S.P."/>
            <person name="Kruger A."/>
            <person name="Kummerfeld S.K."/>
            <person name="Kurochkin I.V."/>
            <person name="Lareau L.F."/>
            <person name="Lazarevic D."/>
            <person name="Lipovich L."/>
            <person name="Liu J."/>
            <person name="Liuni S."/>
            <person name="McWilliam S."/>
            <person name="Madan Babu M."/>
            <person name="Madera M."/>
            <person name="Marchionni L."/>
            <person name="Matsuda H."/>
            <person name="Matsuzawa S."/>
            <person name="Miki H."/>
            <person name="Mignone F."/>
            <person name="Miyake S."/>
            <person name="Morris K."/>
            <person name="Mottagui-Tabar S."/>
            <person name="Mulder N."/>
            <person name="Nakano N."/>
            <person name="Nakauchi H."/>
            <person name="Ng P."/>
            <person name="Nilsson R."/>
            <person name="Nishiguchi S."/>
            <person name="Nishikawa S."/>
            <person name="Nori F."/>
            <person name="Ohara O."/>
            <person name="Okazaki Y."/>
            <person name="Orlando V."/>
            <person name="Pang K.C."/>
            <person name="Pavan W.J."/>
            <person name="Pavesi G."/>
            <person name="Pesole G."/>
            <person name="Petrovsky N."/>
            <person name="Piazza S."/>
            <person name="Reed J."/>
            <person name="Reid J.F."/>
            <person name="Ring B.Z."/>
            <person name="Ringwald M."/>
            <person name="Rost B."/>
            <person name="Ruan Y."/>
            <person name="Salzberg S.L."/>
            <person name="Sandelin A."/>
            <person name="Schneider C."/>
            <person name="Schoenbach C."/>
            <person name="Sekiguchi K."/>
            <person name="Semple C.A."/>
            <person name="Seno S."/>
            <person name="Sessa L."/>
            <person name="Sheng Y."/>
            <person name="Shibata Y."/>
            <person name="Shimada H."/>
            <person name="Shimada K."/>
            <person name="Silva D."/>
            <person name="Sinclair B."/>
            <person name="Sperling S."/>
            <person name="Stupka E."/>
            <person name="Sugiura K."/>
            <person name="Sultana R."/>
            <person name="Takenaka Y."/>
            <person name="Taki K."/>
            <person name="Tammoja K."/>
            <person name="Tan S.L."/>
            <person name="Tang S."/>
            <person name="Taylor M.S."/>
            <person name="Tegner J."/>
            <person name="Teichmann S.A."/>
            <person name="Ueda H.R."/>
            <person name="van Nimwegen E."/>
            <person name="Verardo R."/>
            <person name="Wei C.L."/>
            <person name="Yagi K."/>
            <person name="Yamanishi H."/>
            <person name="Zabarovsky E."/>
            <person name="Zhu S."/>
            <person name="Zimmer A."/>
            <person name="Hide W."/>
            <person name="Bult C."/>
            <person name="Grimmond S.M."/>
            <person name="Teasdale R.D."/>
            <person name="Liu E.T."/>
            <person name="Brusic V."/>
            <person name="Quackenbush J."/>
            <person name="Wahlestedt C."/>
            <person name="Mattick J.S."/>
            <person name="Hume D.A."/>
            <person name="Kai C."/>
            <person name="Sasaki D."/>
            <person name="Tomaru Y."/>
            <person name="Fukuda S."/>
            <person name="Kanamori-Katayama M."/>
            <person name="Suzuki M."/>
            <person name="Aoki J."/>
            <person name="Arakawa T."/>
            <person name="Iida J."/>
            <person name="Imamura K."/>
            <person name="Itoh M."/>
            <person name="Kato T."/>
            <person name="Kawaji H."/>
            <person name="Kawagashira N."/>
            <person name="Kawashima T."/>
            <person name="Kojima M."/>
            <person name="Kondo S."/>
            <person name="Konno H."/>
            <person name="Nakano K."/>
            <person name="Ninomiya N."/>
            <person name="Nishio T."/>
            <person name="Okada M."/>
            <person name="Plessy C."/>
            <person name="Shibata K."/>
            <person name="Shiraki T."/>
            <person name="Suzuki S."/>
            <person name="Tagami M."/>
            <person name="Waki K."/>
            <person name="Watahiki A."/>
            <person name="Okamura-Oho Y."/>
            <person name="Suzuki H."/>
            <person name="Kawai J."/>
            <person name="Hayashizaki Y."/>
        </authorList>
    </citation>
    <scope>NUCLEOTIDE SEQUENCE [LARGE SCALE MRNA]</scope>
    <source>
        <strain>C57BL/6J</strain>
        <tissue>Bone marrow</tissue>
        <tissue>Cerebellum</tissue>
        <tissue>Pancreas</tissue>
    </source>
</reference>
<reference key="2">
    <citation type="journal article" date="2004" name="Genome Res.">
        <title>The status, quality, and expansion of the NIH full-length cDNA project: the Mammalian Gene Collection (MGC).</title>
        <authorList>
            <consortium name="The MGC Project Team"/>
        </authorList>
    </citation>
    <scope>NUCLEOTIDE SEQUENCE [LARGE SCALE MRNA]</scope>
    <source>
        <strain>C57BL/6J</strain>
        <tissue>Mammary tumor</tissue>
    </source>
</reference>
<reference key="3">
    <citation type="journal article" date="2005" name="Proc. Natl. Acad. Sci. U.S.A.">
        <title>Multiprotein complexes that link dislocation, ubiquitination, and extraction of misfolded proteins from the endoplasmic reticulum membrane.</title>
        <authorList>
            <person name="Lilley B.N."/>
            <person name="Ploegh H.L."/>
        </authorList>
    </citation>
    <scope>TISSUE SPECIFICITY</scope>
    <scope>INDUCTION</scope>
</reference>
<reference key="4">
    <citation type="journal article" date="2006" name="J. Cell Biol.">
        <title>Derlin-2 and Derlin-3 are regulated by the mammalian unfolded protein response and are required for ER-associated degradation.</title>
        <authorList>
            <person name="Oda Y."/>
            <person name="Okada T."/>
            <person name="Yoshida H."/>
            <person name="Kaufman R.J."/>
            <person name="Nagata K."/>
            <person name="Mori K."/>
        </authorList>
    </citation>
    <scope>INDUCTION</scope>
</reference>
<reference key="5">
    <citation type="journal article" date="2010" name="Cell">
        <title>A tissue-specific atlas of mouse protein phosphorylation and expression.</title>
        <authorList>
            <person name="Huttlin E.L."/>
            <person name="Jedrychowski M.P."/>
            <person name="Elias J.E."/>
            <person name="Goswami T."/>
            <person name="Rad R."/>
            <person name="Beausoleil S.A."/>
            <person name="Villen J."/>
            <person name="Haas W."/>
            <person name="Sowa M.E."/>
            <person name="Gygi S.P."/>
        </authorList>
    </citation>
    <scope>PHOSPHORYLATION [LARGE SCALE ANALYSIS] AT SER-201</scope>
    <scope>IDENTIFICATION BY MASS SPECTROMETRY [LARGE SCALE ANALYSIS]</scope>
    <source>
        <tissue>Brown adipose tissue</tissue>
        <tissue>Liver</tissue>
        <tissue>Lung</tissue>
        <tissue>Pancreas</tissue>
        <tissue>Spleen</tissue>
        <tissue>Testis</tissue>
    </source>
</reference>
<reference key="6">
    <citation type="journal article" date="2011" name="J. Biol. Chem.">
        <title>Selenoprotein K binds multiprotein complexes and is involved in the regulation of endoplasmic reticulum homeostasis.</title>
        <authorList>
            <person name="Shchedrina V.A."/>
            <person name="Everley R.A."/>
            <person name="Zhang Y."/>
            <person name="Gygi S.P."/>
            <person name="Hatfield D.L."/>
            <person name="Gladyshev V.N."/>
        </authorList>
    </citation>
    <scope>INTERACTION WITH SELENOK AND SELENOS</scope>
</reference>
<reference key="7">
    <citation type="journal article" date="2012" name="J. Biol. Chem.">
        <title>ERdj4 protein is a soluble endoplasmic reticulum (ER) DnaJ family protein that interacts with ER-associated degradation machinery.</title>
        <authorList>
            <person name="Lai C.W."/>
            <person name="Otero J.H."/>
            <person name="Hendershot L.M."/>
            <person name="Snapp E."/>
        </authorList>
    </citation>
    <scope>INTERACTION WITH DNAJB9</scope>
</reference>
<reference key="8">
    <citation type="journal article" date="2014" name="Biochem. J.">
        <title>Signal-peptide-mediated translocation is regulated by a p97-AIRAPL complex.</title>
        <authorList>
            <person name="Glinka T."/>
            <person name="Alter J."/>
            <person name="Braunstein I."/>
            <person name="Tzach L."/>
            <person name="Wei Sheng C."/>
            <person name="Geifman S."/>
            <person name="Edelmann M.J."/>
            <person name="Kessler B.M."/>
            <person name="Stanhill A."/>
        </authorList>
    </citation>
    <scope>INTERACTION WITH ZFAND2B</scope>
</reference>
<reference key="9">
    <citation type="journal article" date="2014" name="Dev. Biol.">
        <title>Contribution of calumin to embryogenesis through participation in the endoplasmic reticulum-associated degradation activity.</title>
        <authorList>
            <person name="Yamamoto S."/>
            <person name="Yamazaki T."/>
            <person name="Komazaki S."/>
            <person name="Yamashita T."/>
            <person name="Osaki M."/>
            <person name="Matsubayashi M."/>
            <person name="Kidoya H."/>
            <person name="Takakura N."/>
            <person name="Yamazaki D."/>
            <person name="Kakizawa S."/>
        </authorList>
    </citation>
    <scope>INTERACTION WITH CCDC47</scope>
</reference>
<comment type="function">
    <text evidence="1">Functional component of endoplasmic reticulum-associated degradation (ERAD) for misfolded lumenal proteins. Forms homotetramers which encircle a large channel traversing the endoplasmic reticulum (ER) membrane. This allows the retrotranslocation of misfolded proteins from the ER into the cytosol where they are ubiquitinated and degraded by the proteasome. The channel has a lateral gate within the membrane which provides direct access to membrane proteins with no need to reenter the ER lumen first. May mediate the interaction between VCP and the misfolded protein. Also involved in endoplasmic reticulum stress-induced pre-emptive quality control, a mechanism that selectively attenuates the translocation of newly synthesized proteins into the endoplasmic reticulum and reroutes them to the cytosol for proteasomal degradation. By controlling the steady-state expression of the IGF1R receptor, indirectly regulates the insulin-like growth factor receptor signaling pathway.</text>
</comment>
<comment type="subunit">
    <text evidence="1 5 6 7">Homotetramer (By similarity). The four subunits of the tetramer are arranged in a twofold symmetry (By similarity). Forms homo- and heterooligomers with DERL2 and DERL3; binding to DERL3 is poorer than that between DERL2 and DERL3. Interacts (via SHP-box motif) with VCP (By similarity). Interacts with AMFR, SELENOS, SEL1L, SELENOK and SYVN1, as well as with SEL1L-SYVN1 and VCP-SELENOS protein complexes; this interaction is weaker than that observed between DERL2 and these complexes. Interacts with NGLY1 and YOD1. Does not bind to EDEM1 (By similarity). Interacts with DNAJB9 (PubMed:22267725). Interacts with RNF103. Interacts with HM13. Interacts with XBP1 isoform 1 (via luminal/ectodomain domain); the interaction obviates the need for ectodomain shedding prior HM13/SPP-mediated XBP1 isoform 1 cleavage. Interacts with the signal recognition particle/SRP and the SRP receptor; in the process of endoplasmic reticulum stress-induced pre-emptive quality control. May interact with UBXN6 (By similarity). Interacts with ZFAND2B; probably through VCP (PubMed:24160817). Interacts with CCDC47 (PubMed:25009997). Interacts with C18orf32 (By similarity). May interact with TRAM1 (By similarity). Forms a complex with SVIP and VCP/p97 (By similarity).</text>
</comment>
<comment type="subcellular location">
    <subcellularLocation>
        <location evidence="1">Endoplasmic reticulum membrane</location>
        <topology evidence="1">Multi-pass membrane protein</topology>
    </subcellularLocation>
</comment>
<comment type="tissue specificity">
    <text evidence="3">Widely expressed, with lowest levels in brain and heart.</text>
</comment>
<comment type="induction">
    <text evidence="3 4">Up-regulated in response to endoplasmic reticulum stress via the ERN1-XBP1 pathway of the unfolded protein response (UPR).</text>
</comment>
<comment type="similarity">
    <text evidence="9">Belongs to the derlin family.</text>
</comment>
<name>DERL1_MOUSE</name>
<gene>
    <name evidence="10" type="primary">Derl1</name>
    <name type="synonym">Der1</name>
</gene>
<sequence>MSDIGDWFRSIPAITRYWFAATVAVPLIGKLGIISPAYFFLWPEAFLYRFQIWRPFTATFYFPVGPGTGFLYLVNLYFLYQYSTRLEAGAFDGRPADYLFMLLFNWICIVITGLAMDMQLLMIPLIMSVLYVWAQLNRDLIVSFWFGTRFKACYLPWVILGFNYIIGGSVINELIGNLVGHLYFFLMFRYPMDLGGRNFLSTPQFLYRWLPSRRGGVSGFGVPPASMRRAADQNGGGGRHNWGQGFRLGDQ</sequence>
<dbReference type="EMBL" id="AK007435">
    <property type="protein sequence ID" value="BAB25036.1"/>
    <property type="molecule type" value="mRNA"/>
</dbReference>
<dbReference type="EMBL" id="AK043420">
    <property type="protein sequence ID" value="BAC31545.1"/>
    <property type="molecule type" value="mRNA"/>
</dbReference>
<dbReference type="EMBL" id="AK075631">
    <property type="protein sequence ID" value="BAC35868.1"/>
    <property type="molecule type" value="mRNA"/>
</dbReference>
<dbReference type="EMBL" id="AK152197">
    <property type="protein sequence ID" value="BAE31026.1"/>
    <property type="molecule type" value="mRNA"/>
</dbReference>
<dbReference type="EMBL" id="AK152901">
    <property type="protein sequence ID" value="BAE31582.1"/>
    <property type="molecule type" value="mRNA"/>
</dbReference>
<dbReference type="EMBL" id="BC003454">
    <property type="protein sequence ID" value="AAH03454.1"/>
    <property type="molecule type" value="mRNA"/>
</dbReference>
<dbReference type="EMBL" id="BC085490">
    <property type="protein sequence ID" value="AAH85490.1"/>
    <property type="molecule type" value="mRNA"/>
</dbReference>
<dbReference type="CCDS" id="CCDS27484.1"/>
<dbReference type="RefSeq" id="NP_077169.1">
    <property type="nucleotide sequence ID" value="NM_024207.4"/>
</dbReference>
<dbReference type="SMR" id="Q99J56"/>
<dbReference type="BioGRID" id="212459">
    <property type="interactions" value="6"/>
</dbReference>
<dbReference type="FunCoup" id="Q99J56">
    <property type="interactions" value="2348"/>
</dbReference>
<dbReference type="STRING" id="10090.ENSMUSP00000022993"/>
<dbReference type="iPTMnet" id="Q99J56"/>
<dbReference type="PhosphoSitePlus" id="Q99J56"/>
<dbReference type="SwissPalm" id="Q99J56"/>
<dbReference type="jPOST" id="Q99J56"/>
<dbReference type="PaxDb" id="10090-ENSMUSP00000022993"/>
<dbReference type="ProteomicsDB" id="279627"/>
<dbReference type="Pumba" id="Q99J56"/>
<dbReference type="Antibodypedia" id="13772">
    <property type="antibodies" value="240 antibodies from 28 providers"/>
</dbReference>
<dbReference type="DNASU" id="67819"/>
<dbReference type="Ensembl" id="ENSMUST00000022993.7">
    <property type="protein sequence ID" value="ENSMUSP00000022993.6"/>
    <property type="gene ID" value="ENSMUSG00000022365.7"/>
</dbReference>
<dbReference type="GeneID" id="67819"/>
<dbReference type="KEGG" id="mmu:67819"/>
<dbReference type="UCSC" id="uc007vsq.1">
    <property type="organism name" value="mouse"/>
</dbReference>
<dbReference type="AGR" id="MGI:1915069"/>
<dbReference type="CTD" id="79139"/>
<dbReference type="MGI" id="MGI:1915069">
    <property type="gene designation" value="Derl1"/>
</dbReference>
<dbReference type="VEuPathDB" id="HostDB:ENSMUSG00000022365"/>
<dbReference type="eggNOG" id="KOG0858">
    <property type="taxonomic scope" value="Eukaryota"/>
</dbReference>
<dbReference type="GeneTree" id="ENSGT00530000063156"/>
<dbReference type="HOGENOM" id="CLU_051898_3_1_1"/>
<dbReference type="InParanoid" id="Q99J56"/>
<dbReference type="OMA" id="LWRCVTS"/>
<dbReference type="OrthoDB" id="19102at2759"/>
<dbReference type="PhylomeDB" id="Q99J56"/>
<dbReference type="TreeFam" id="TF354297"/>
<dbReference type="Reactome" id="R-MMU-382556">
    <property type="pathway name" value="ABC-family proteins mediated transport"/>
</dbReference>
<dbReference type="Reactome" id="R-MMU-532668">
    <property type="pathway name" value="N-glycan trimming in the ER and Calnexin/Calreticulin cycle"/>
</dbReference>
<dbReference type="BioGRID-ORCS" id="67819">
    <property type="hits" value="10 hits in 77 CRISPR screens"/>
</dbReference>
<dbReference type="ChiTaRS" id="Derl1">
    <property type="organism name" value="mouse"/>
</dbReference>
<dbReference type="PRO" id="PR:Q99J56"/>
<dbReference type="Proteomes" id="UP000000589">
    <property type="component" value="Chromosome 15"/>
</dbReference>
<dbReference type="RNAct" id="Q99J56">
    <property type="molecule type" value="protein"/>
</dbReference>
<dbReference type="Bgee" id="ENSMUSG00000022365">
    <property type="expression patterns" value="Expressed in vestibular membrane of cochlear duct and 262 other cell types or tissues"/>
</dbReference>
<dbReference type="GO" id="GO:0036513">
    <property type="term" value="C:Derlin-1 retrotranslocation complex"/>
    <property type="evidence" value="ECO:0007669"/>
    <property type="project" value="Ensembl"/>
</dbReference>
<dbReference type="GO" id="GO:0036502">
    <property type="term" value="C:Derlin-1-VIMP complex"/>
    <property type="evidence" value="ECO:0007669"/>
    <property type="project" value="Ensembl"/>
</dbReference>
<dbReference type="GO" id="GO:0005769">
    <property type="term" value="C:early endosome"/>
    <property type="evidence" value="ECO:0000314"/>
    <property type="project" value="MGI"/>
</dbReference>
<dbReference type="GO" id="GO:0005783">
    <property type="term" value="C:endoplasmic reticulum"/>
    <property type="evidence" value="ECO:0000314"/>
    <property type="project" value="MGI"/>
</dbReference>
<dbReference type="GO" id="GO:0005789">
    <property type="term" value="C:endoplasmic reticulum membrane"/>
    <property type="evidence" value="ECO:0000250"/>
    <property type="project" value="UniProtKB"/>
</dbReference>
<dbReference type="GO" id="GO:0044322">
    <property type="term" value="C:endoplasmic reticulum quality control compartment"/>
    <property type="evidence" value="ECO:0000314"/>
    <property type="project" value="UniProtKB"/>
</dbReference>
<dbReference type="GO" id="GO:0005770">
    <property type="term" value="C:late endosome"/>
    <property type="evidence" value="ECO:0000314"/>
    <property type="project" value="MGI"/>
</dbReference>
<dbReference type="GO" id="GO:0016020">
    <property type="term" value="C:membrane"/>
    <property type="evidence" value="ECO:0000266"/>
    <property type="project" value="MGI"/>
</dbReference>
<dbReference type="GO" id="GO:0051117">
    <property type="term" value="F:ATPase binding"/>
    <property type="evidence" value="ECO:0000250"/>
    <property type="project" value="UniProtKB"/>
</dbReference>
<dbReference type="GO" id="GO:0042802">
    <property type="term" value="F:identical protein binding"/>
    <property type="evidence" value="ECO:0007669"/>
    <property type="project" value="Ensembl"/>
</dbReference>
<dbReference type="GO" id="GO:0042288">
    <property type="term" value="F:MHC class I protein binding"/>
    <property type="evidence" value="ECO:0000250"/>
    <property type="project" value="UniProtKB"/>
</dbReference>
<dbReference type="GO" id="GO:0005047">
    <property type="term" value="F:signal recognition particle binding"/>
    <property type="evidence" value="ECO:0000250"/>
    <property type="project" value="UniProtKB"/>
</dbReference>
<dbReference type="GO" id="GO:0031625">
    <property type="term" value="F:ubiquitin protein ligase binding"/>
    <property type="evidence" value="ECO:0007669"/>
    <property type="project" value="Ensembl"/>
</dbReference>
<dbReference type="GO" id="GO:1990381">
    <property type="term" value="F:ubiquitin-specific protease binding"/>
    <property type="evidence" value="ECO:0007669"/>
    <property type="project" value="Ensembl"/>
</dbReference>
<dbReference type="GO" id="GO:0071218">
    <property type="term" value="P:cellular response to misfolded protein"/>
    <property type="evidence" value="ECO:0007669"/>
    <property type="project" value="Ensembl"/>
</dbReference>
<dbReference type="GO" id="GO:0034620">
    <property type="term" value="P:cellular response to unfolded protein"/>
    <property type="evidence" value="ECO:0000315"/>
    <property type="project" value="MGI"/>
</dbReference>
<dbReference type="GO" id="GO:0030968">
    <property type="term" value="P:endoplasmic reticulum unfolded protein response"/>
    <property type="evidence" value="ECO:0000250"/>
    <property type="project" value="UniProtKB"/>
</dbReference>
<dbReference type="GO" id="GO:0036503">
    <property type="term" value="P:ERAD pathway"/>
    <property type="evidence" value="ECO:0000250"/>
    <property type="project" value="UniProtKB"/>
</dbReference>
<dbReference type="GO" id="GO:0031398">
    <property type="term" value="P:positive regulation of protein ubiquitination"/>
    <property type="evidence" value="ECO:0007669"/>
    <property type="project" value="Ensembl"/>
</dbReference>
<dbReference type="GO" id="GO:0043161">
    <property type="term" value="P:proteasome-mediated ubiquitin-dependent protein catabolic process"/>
    <property type="evidence" value="ECO:0000315"/>
    <property type="project" value="UniProtKB"/>
</dbReference>
<dbReference type="GO" id="GO:0031648">
    <property type="term" value="P:protein destabilization"/>
    <property type="evidence" value="ECO:0000250"/>
    <property type="project" value="UniProtKB"/>
</dbReference>
<dbReference type="GO" id="GO:0006986">
    <property type="term" value="P:response to unfolded protein"/>
    <property type="evidence" value="ECO:0000266"/>
    <property type="project" value="MGI"/>
</dbReference>
<dbReference type="GO" id="GO:0030970">
    <property type="term" value="P:retrograde protein transport, ER to cytosol"/>
    <property type="evidence" value="ECO:0000250"/>
    <property type="project" value="UniProtKB"/>
</dbReference>
<dbReference type="InterPro" id="IPR007599">
    <property type="entry name" value="DER1"/>
</dbReference>
<dbReference type="InterPro" id="IPR035952">
    <property type="entry name" value="Rhomboid-like_sf"/>
</dbReference>
<dbReference type="PANTHER" id="PTHR11009">
    <property type="entry name" value="DER1-LIKE PROTEIN, DERLIN"/>
    <property type="match status" value="1"/>
</dbReference>
<dbReference type="Pfam" id="PF04511">
    <property type="entry name" value="DER1"/>
    <property type="match status" value="1"/>
</dbReference>
<dbReference type="SUPFAM" id="SSF144091">
    <property type="entry name" value="Rhomboid-like"/>
    <property type="match status" value="1"/>
</dbReference>
<protein>
    <recommendedName>
        <fullName evidence="8">Derlin-1</fullName>
    </recommendedName>
    <alternativeName>
        <fullName>Degradation in endoplasmic reticulum protein 1</fullName>
    </alternativeName>
    <alternativeName>
        <fullName evidence="8">Der1-like protein 1</fullName>
    </alternativeName>
</protein>
<feature type="initiator methionine" description="Removed" evidence="1">
    <location>
        <position position="1"/>
    </location>
</feature>
<feature type="chain" id="PRO_0000219043" description="Derlin-1">
    <location>
        <begin position="2"/>
        <end position="251"/>
    </location>
</feature>
<feature type="topological domain" description="Cytoplasmic" evidence="1">
    <location>
        <begin position="2"/>
        <end position="15"/>
    </location>
</feature>
<feature type="transmembrane region" description="Helical; Name=1" evidence="1">
    <location>
        <begin position="16"/>
        <end position="31"/>
    </location>
</feature>
<feature type="topological domain" description="Lumenal" evidence="1">
    <location>
        <begin position="32"/>
        <end position="69"/>
    </location>
</feature>
<feature type="transmembrane region" description="Helical; Name=2" evidence="1">
    <location>
        <begin position="70"/>
        <end position="89"/>
    </location>
</feature>
<feature type="topological domain" description="Cytoplasmic" evidence="1">
    <location>
        <begin position="90"/>
        <end position="94"/>
    </location>
</feature>
<feature type="transmembrane region" description="Helical; Name=3" evidence="1">
    <location>
        <begin position="95"/>
        <end position="115"/>
    </location>
</feature>
<feature type="topological domain" description="Lumenal" evidence="1">
    <location>
        <begin position="116"/>
        <end position="122"/>
    </location>
</feature>
<feature type="transmembrane region" description="Helical; Name=4" evidence="1">
    <location>
        <begin position="123"/>
        <end position="137"/>
    </location>
</feature>
<feature type="topological domain" description="Cytoplasmic" evidence="1">
    <location>
        <begin position="138"/>
        <end position="154"/>
    </location>
</feature>
<feature type="transmembrane region" description="Helical; Name=5" evidence="1">
    <location>
        <begin position="155"/>
        <end position="166"/>
    </location>
</feature>
<feature type="topological domain" description="Lumenal" evidence="1">
    <location>
        <begin position="167"/>
        <end position="170"/>
    </location>
</feature>
<feature type="transmembrane region" description="Helical; Name=6" evidence="1">
    <location>
        <begin position="171"/>
        <end position="189"/>
    </location>
</feature>
<feature type="topological domain" description="Cytoplasmic" evidence="1">
    <location>
        <begin position="190"/>
        <end position="251"/>
    </location>
</feature>
<feature type="region of interest" description="Disordered" evidence="2">
    <location>
        <begin position="229"/>
        <end position="251"/>
    </location>
</feature>
<feature type="short sequence motif" description="SHP-box" evidence="1">
    <location>
        <begin position="241"/>
        <end position="248"/>
    </location>
</feature>
<feature type="modified residue" description="N-acetylserine" evidence="1">
    <location>
        <position position="2"/>
    </location>
</feature>
<feature type="modified residue" description="Phosphoserine" evidence="11">
    <location>
        <position position="201"/>
    </location>
</feature>
<feature type="modified residue" description="Phosphothreonine" evidence="1">
    <location>
        <position position="202"/>
    </location>
</feature>
<feature type="modified residue" description="Phosphoserine" evidence="1">
    <location>
        <position position="226"/>
    </location>
</feature>
<feature type="sequence conflict" description="In Ref. 1; BAB25036." evidence="9" ref="1">
    <original>A</original>
    <variation>V</variation>
    <location>
        <position position="13"/>
    </location>
</feature>
<feature type="sequence conflict" description="In Ref. 1; BAB25036." evidence="9" ref="1">
    <original>Y</original>
    <variation>N</variation>
    <location>
        <position position="17"/>
    </location>
</feature>
<feature type="sequence conflict" description="In Ref. 1; BAB25036." evidence="9" ref="1">
    <original>A</original>
    <variation>V</variation>
    <location>
        <position position="20"/>
    </location>
</feature>
<keyword id="KW-0007">Acetylation</keyword>
<keyword id="KW-0256">Endoplasmic reticulum</keyword>
<keyword id="KW-0472">Membrane</keyword>
<keyword id="KW-0597">Phosphoprotein</keyword>
<keyword id="KW-0653">Protein transport</keyword>
<keyword id="KW-1185">Reference proteome</keyword>
<keyword id="KW-0812">Transmembrane</keyword>
<keyword id="KW-1133">Transmembrane helix</keyword>
<keyword id="KW-0813">Transport</keyword>
<keyword id="KW-0834">Unfolded protein response</keyword>
<proteinExistence type="evidence at protein level"/>
<accession>Q99J56</accession>
<accession>Q3U6Z2</accession>
<accession>Q9D918</accession>
<organism>
    <name type="scientific">Mus musculus</name>
    <name type="common">Mouse</name>
    <dbReference type="NCBI Taxonomy" id="10090"/>
    <lineage>
        <taxon>Eukaryota</taxon>
        <taxon>Metazoa</taxon>
        <taxon>Chordata</taxon>
        <taxon>Craniata</taxon>
        <taxon>Vertebrata</taxon>
        <taxon>Euteleostomi</taxon>
        <taxon>Mammalia</taxon>
        <taxon>Eutheria</taxon>
        <taxon>Euarchontoglires</taxon>
        <taxon>Glires</taxon>
        <taxon>Rodentia</taxon>
        <taxon>Myomorpha</taxon>
        <taxon>Muroidea</taxon>
        <taxon>Muridae</taxon>
        <taxon>Murinae</taxon>
        <taxon>Mus</taxon>
        <taxon>Mus</taxon>
    </lineage>
</organism>
<evidence type="ECO:0000250" key="1">
    <source>
        <dbReference type="UniProtKB" id="Q9BUN8"/>
    </source>
</evidence>
<evidence type="ECO:0000256" key="2">
    <source>
        <dbReference type="SAM" id="MobiDB-lite"/>
    </source>
</evidence>
<evidence type="ECO:0000269" key="3">
    <source>
    </source>
</evidence>
<evidence type="ECO:0000269" key="4">
    <source>
    </source>
</evidence>
<evidence type="ECO:0000269" key="5">
    <source>
    </source>
</evidence>
<evidence type="ECO:0000269" key="6">
    <source>
    </source>
</evidence>
<evidence type="ECO:0000269" key="7">
    <source>
    </source>
</evidence>
<evidence type="ECO:0000303" key="8">
    <source>
    </source>
</evidence>
<evidence type="ECO:0000305" key="9"/>
<evidence type="ECO:0000312" key="10">
    <source>
        <dbReference type="MGI" id="MGI:1915069"/>
    </source>
</evidence>
<evidence type="ECO:0007744" key="11">
    <source>
    </source>
</evidence>